<reference key="1">
    <citation type="journal article" date="1993" name="Plant Mol. Biol.">
        <title>Isolation and characterization of a cDNA encoding NADP(+)-specific isocitrate dehydrogenase from soybean (Glycine max).</title>
        <authorList>
            <person name="Udvardi M.K."/>
            <person name="McDermott T.R."/>
            <person name="Kahn M.L."/>
        </authorList>
    </citation>
    <scope>NUCLEOTIDE SEQUENCE [MRNA]</scope>
    <scope>CATALYTIC ACTIVITY</scope>
    <scope>COFACTOR</scope>
    <source>
        <strain>cv. Harosoy-L1</strain>
        <tissue>Root nodule</tissue>
    </source>
</reference>
<dbReference type="EC" id="1.1.1.42" evidence="4"/>
<dbReference type="EMBL" id="L12157">
    <property type="protein sequence ID" value="AAA33978.1"/>
    <property type="status" value="ALT_INIT"/>
    <property type="molecule type" value="mRNA"/>
</dbReference>
<dbReference type="RefSeq" id="XP_014622642.1">
    <property type="nucleotide sequence ID" value="XM_014767156.1"/>
</dbReference>
<dbReference type="SMR" id="Q06197"/>
<dbReference type="FunCoup" id="Q06197">
    <property type="interactions" value="4609"/>
</dbReference>
<dbReference type="STRING" id="3847.Q06197"/>
<dbReference type="PaxDb" id="3847-GLYMA14G39160.2"/>
<dbReference type="ProMEX" id="Q06197"/>
<dbReference type="EnsemblPlants" id="KRH17285">
    <property type="protein sequence ID" value="KRH17285"/>
    <property type="gene ID" value="GLYMA_14G211000"/>
</dbReference>
<dbReference type="Gramene" id="KRH17285">
    <property type="protein sequence ID" value="KRH17285"/>
    <property type="gene ID" value="GLYMA_14G211000"/>
</dbReference>
<dbReference type="eggNOG" id="KOG1526">
    <property type="taxonomic scope" value="Eukaryota"/>
</dbReference>
<dbReference type="HOGENOM" id="CLU_023296_1_1_1"/>
<dbReference type="InParanoid" id="Q06197"/>
<dbReference type="OMA" id="HGTVQRH"/>
<dbReference type="Proteomes" id="UP000008827">
    <property type="component" value="Chromosome 14"/>
</dbReference>
<dbReference type="GO" id="GO:0005739">
    <property type="term" value="C:mitochondrion"/>
    <property type="evidence" value="ECO:0000318"/>
    <property type="project" value="GO_Central"/>
</dbReference>
<dbReference type="GO" id="GO:0004450">
    <property type="term" value="F:isocitrate dehydrogenase (NADP+) activity"/>
    <property type="evidence" value="ECO:0000318"/>
    <property type="project" value="GO_Central"/>
</dbReference>
<dbReference type="GO" id="GO:0000287">
    <property type="term" value="F:magnesium ion binding"/>
    <property type="evidence" value="ECO:0007669"/>
    <property type="project" value="InterPro"/>
</dbReference>
<dbReference type="GO" id="GO:0051287">
    <property type="term" value="F:NAD binding"/>
    <property type="evidence" value="ECO:0007669"/>
    <property type="project" value="InterPro"/>
</dbReference>
<dbReference type="GO" id="GO:0006097">
    <property type="term" value="P:glyoxylate cycle"/>
    <property type="evidence" value="ECO:0007669"/>
    <property type="project" value="UniProtKB-KW"/>
</dbReference>
<dbReference type="GO" id="GO:0006102">
    <property type="term" value="P:isocitrate metabolic process"/>
    <property type="evidence" value="ECO:0000318"/>
    <property type="project" value="GO_Central"/>
</dbReference>
<dbReference type="GO" id="GO:0006739">
    <property type="term" value="P:NADP metabolic process"/>
    <property type="evidence" value="ECO:0000318"/>
    <property type="project" value="GO_Central"/>
</dbReference>
<dbReference type="GO" id="GO:0006099">
    <property type="term" value="P:tricarboxylic acid cycle"/>
    <property type="evidence" value="ECO:0007669"/>
    <property type="project" value="UniProtKB-KW"/>
</dbReference>
<dbReference type="FunFam" id="3.40.718.10:FF:000007">
    <property type="entry name" value="Isocitrate dehydrogenase [NADP]"/>
    <property type="match status" value="1"/>
</dbReference>
<dbReference type="Gene3D" id="3.40.718.10">
    <property type="entry name" value="Isopropylmalate Dehydrogenase"/>
    <property type="match status" value="1"/>
</dbReference>
<dbReference type="InterPro" id="IPR019818">
    <property type="entry name" value="IsoCit/isopropylmalate_DH_CS"/>
</dbReference>
<dbReference type="InterPro" id="IPR004790">
    <property type="entry name" value="Isocitrate_DH_NADP"/>
</dbReference>
<dbReference type="InterPro" id="IPR024084">
    <property type="entry name" value="IsoPropMal-DH-like_dom"/>
</dbReference>
<dbReference type="NCBIfam" id="TIGR00127">
    <property type="entry name" value="nadp_idh_euk"/>
    <property type="match status" value="1"/>
</dbReference>
<dbReference type="NCBIfam" id="NF006156">
    <property type="entry name" value="PRK08299.1"/>
    <property type="match status" value="1"/>
</dbReference>
<dbReference type="PANTHER" id="PTHR11822:SF21">
    <property type="entry name" value="ISOCITRATE DEHYDROGENASE [NADP], MITOCHONDRIAL"/>
    <property type="match status" value="1"/>
</dbReference>
<dbReference type="PANTHER" id="PTHR11822">
    <property type="entry name" value="NADP-SPECIFIC ISOCITRATE DEHYDROGENASE"/>
    <property type="match status" value="1"/>
</dbReference>
<dbReference type="Pfam" id="PF00180">
    <property type="entry name" value="Iso_dh"/>
    <property type="match status" value="1"/>
</dbReference>
<dbReference type="PIRSF" id="PIRSF000108">
    <property type="entry name" value="IDH_NADP"/>
    <property type="match status" value="1"/>
</dbReference>
<dbReference type="SMART" id="SM01329">
    <property type="entry name" value="Iso_dh"/>
    <property type="match status" value="1"/>
</dbReference>
<dbReference type="SUPFAM" id="SSF53659">
    <property type="entry name" value="Isocitrate/Isopropylmalate dehydrogenase-like"/>
    <property type="match status" value="1"/>
</dbReference>
<dbReference type="PROSITE" id="PS00470">
    <property type="entry name" value="IDH_IMDH"/>
    <property type="match status" value="1"/>
</dbReference>
<proteinExistence type="evidence at protein level"/>
<organism>
    <name type="scientific">Glycine max</name>
    <name type="common">Soybean</name>
    <name type="synonym">Glycine hispida</name>
    <dbReference type="NCBI Taxonomy" id="3847"/>
    <lineage>
        <taxon>Eukaryota</taxon>
        <taxon>Viridiplantae</taxon>
        <taxon>Streptophyta</taxon>
        <taxon>Embryophyta</taxon>
        <taxon>Tracheophyta</taxon>
        <taxon>Spermatophyta</taxon>
        <taxon>Magnoliopsida</taxon>
        <taxon>eudicotyledons</taxon>
        <taxon>Gunneridae</taxon>
        <taxon>Pentapetalae</taxon>
        <taxon>rosids</taxon>
        <taxon>fabids</taxon>
        <taxon>Fabales</taxon>
        <taxon>Fabaceae</taxon>
        <taxon>Papilionoideae</taxon>
        <taxon>50 kb inversion clade</taxon>
        <taxon>NPAAA clade</taxon>
        <taxon>indigoferoid/millettioid clade</taxon>
        <taxon>Phaseoleae</taxon>
        <taxon>Glycine</taxon>
        <taxon>Glycine subgen. Soja</taxon>
    </lineage>
</organism>
<accession>Q06197</accession>
<keyword id="KW-0963">Cytoplasm</keyword>
<keyword id="KW-0329">Glyoxylate bypass</keyword>
<keyword id="KW-0460">Magnesium</keyword>
<keyword id="KW-0464">Manganese</keyword>
<keyword id="KW-0479">Metal-binding</keyword>
<keyword id="KW-0521">NADP</keyword>
<keyword id="KW-0560">Oxidoreductase</keyword>
<keyword id="KW-1185">Reference proteome</keyword>
<keyword id="KW-0816">Tricarboxylic acid cycle</keyword>
<sequence length="413" mass="46050">MAAFQKIKVANPIVEMDGDEMTRVIWKSIKDKLILPFLELDIKYYDLGLPYRDETDDKVTIESAEATLKYNVAIKCATITPDEARVKEFGLKSMWKSPNGTIRNILNGTVFREPILCKNIPRLVPGWTKAICIGRHAFGDQYRATDTVIKGAGKLKLVFVPEGQGEETEFEVFNFTGEGGVSLAMYNTDESIRSFAEASMATALEKKWPLYLSTKNTILKKYDGRFKDIFQEVYEASWKSKFEAAGIWYEHRLIDDMVAYALKSEGGYVWACKNYDGDVQSDFLAQGFGSLGLMTSVLVCPDGKTIEAEAAHGTVTRHFRVHQKGGETSTNSIASIFAWTRGLAHRAKLDDNAKLLDFTEKLEAACIGVVEAGKMTKDLALILHGSKLSREHYLNTEEFIDAVAAELSARLSA</sequence>
<name>IDHC_SOYBN</name>
<gene>
    <name type="primary">IDH1</name>
</gene>
<feature type="chain" id="PRO_0000083585" description="Isocitrate dehydrogenase [NADP]">
    <location>
        <begin position="1"/>
        <end position="413"/>
    </location>
</feature>
<feature type="binding site" evidence="2">
    <location>
        <begin position="78"/>
        <end position="80"/>
    </location>
    <ligand>
        <name>NADP(+)</name>
        <dbReference type="ChEBI" id="CHEBI:58349"/>
    </ligand>
</feature>
<feature type="binding site" description="in other chain" evidence="2">
    <location>
        <position position="80"/>
    </location>
    <ligand>
        <name>substrate</name>
        <note>ligand shared between two neighboring subunits</note>
    </ligand>
</feature>
<feature type="binding site" evidence="2">
    <location>
        <position position="85"/>
    </location>
    <ligand>
        <name>NADP(+)</name>
        <dbReference type="ChEBI" id="CHEBI:58349"/>
    </ligand>
</feature>
<feature type="binding site" description="in other chain" evidence="2">
    <location>
        <begin position="97"/>
        <end position="103"/>
    </location>
    <ligand>
        <name>substrate</name>
        <note>ligand shared between two neighboring subunits</note>
    </ligand>
</feature>
<feature type="binding site" description="in other chain" evidence="2">
    <location>
        <position position="112"/>
    </location>
    <ligand>
        <name>substrate</name>
        <note>ligand shared between two neighboring subunits</note>
    </ligand>
</feature>
<feature type="binding site" description="in other chain" evidence="2">
    <location>
        <position position="135"/>
    </location>
    <ligand>
        <name>substrate</name>
        <note>ligand shared between two neighboring subunits</note>
    </ligand>
</feature>
<feature type="binding site" evidence="3">
    <location>
        <position position="215"/>
    </location>
    <ligand>
        <name>substrate</name>
        <note>ligand shared between two neighboring subunits</note>
    </ligand>
</feature>
<feature type="binding site" evidence="2">
    <location>
        <position position="255"/>
    </location>
    <ligand>
        <name>Mn(2+)</name>
        <dbReference type="ChEBI" id="CHEBI:29035"/>
        <note>ligand shared between two neighboring subunits</note>
    </ligand>
</feature>
<feature type="binding site" evidence="2">
    <location>
        <position position="263"/>
    </location>
    <ligand>
        <name>NADP(+)</name>
        <dbReference type="ChEBI" id="CHEBI:58349"/>
    </ligand>
</feature>
<feature type="binding site" description="in other chain" evidence="2">
    <location>
        <position position="278"/>
    </location>
    <ligand>
        <name>Mn(2+)</name>
        <dbReference type="ChEBI" id="CHEBI:29035"/>
        <note>ligand shared between two neighboring subunits</note>
    </ligand>
</feature>
<feature type="binding site" description="in other chain" evidence="2">
    <location>
        <position position="282"/>
    </location>
    <ligand>
        <name>Mn(2+)</name>
        <dbReference type="ChEBI" id="CHEBI:29035"/>
        <note>ligand shared between two neighboring subunits</note>
    </ligand>
</feature>
<feature type="binding site" evidence="2">
    <location>
        <begin position="313"/>
        <end position="318"/>
    </location>
    <ligand>
        <name>NADP(+)</name>
        <dbReference type="ChEBI" id="CHEBI:58349"/>
    </ligand>
</feature>
<feature type="binding site" evidence="2">
    <location>
        <position position="331"/>
    </location>
    <ligand>
        <name>NADP(+)</name>
        <dbReference type="ChEBI" id="CHEBI:58349"/>
    </ligand>
</feature>
<feature type="site" description="Critical for catalysis" evidence="1">
    <location>
        <position position="142"/>
    </location>
</feature>
<feature type="site" description="Critical for catalysis" evidence="1">
    <location>
        <position position="215"/>
    </location>
</feature>
<protein>
    <recommendedName>
        <fullName>Isocitrate dehydrogenase [NADP]</fullName>
        <shortName>IDH</shortName>
        <ecNumber evidence="4">1.1.1.42</ecNumber>
    </recommendedName>
    <alternativeName>
        <fullName>IDP</fullName>
    </alternativeName>
    <alternativeName>
        <fullName>NADP(+)-specific ICDH</fullName>
    </alternativeName>
    <alternativeName>
        <fullName>Oxalosuccinate decarboxylase</fullName>
    </alternativeName>
</protein>
<comment type="function">
    <text evidence="1">May supply 2-oxoglutarate for amino acid biosynthesis and ammonia assimilation via the glutamine synthetase/glutamate synthase (GS/GOGAT) pathway.</text>
</comment>
<comment type="catalytic activity">
    <reaction evidence="4">
        <text>D-threo-isocitrate + NADP(+) = 2-oxoglutarate + CO2 + NADPH</text>
        <dbReference type="Rhea" id="RHEA:19629"/>
        <dbReference type="ChEBI" id="CHEBI:15562"/>
        <dbReference type="ChEBI" id="CHEBI:16526"/>
        <dbReference type="ChEBI" id="CHEBI:16810"/>
        <dbReference type="ChEBI" id="CHEBI:57783"/>
        <dbReference type="ChEBI" id="CHEBI:58349"/>
        <dbReference type="EC" id="1.1.1.42"/>
    </reaction>
</comment>
<comment type="cofactor">
    <cofactor evidence="4">
        <name>Mg(2+)</name>
        <dbReference type="ChEBI" id="CHEBI:18420"/>
    </cofactor>
    <cofactor evidence="4">
        <name>Mn(2+)</name>
        <dbReference type="ChEBI" id="CHEBI:29035"/>
    </cofactor>
    <text evidence="3">Binds 1 Mg(2+) or Mn(2+) ion per subunit.</text>
</comment>
<comment type="subunit">
    <text>Heterodimer.</text>
</comment>
<comment type="subcellular location">
    <subcellularLocation>
        <location>Cytoplasm</location>
    </subcellularLocation>
</comment>
<comment type="tissue specificity">
    <text>Leaves, nodules and roots with the relative amount of 1:3.4:7.7.</text>
</comment>
<comment type="similarity">
    <text evidence="5">Belongs to the isocitrate and isopropylmalate dehydrogenases family.</text>
</comment>
<comment type="sequence caution" evidence="5">
    <conflict type="erroneous initiation">
        <sequence resource="EMBL-CDS" id="AAA33978"/>
    </conflict>
    <text>Extended N-terminus.</text>
</comment>
<evidence type="ECO:0000250" key="1"/>
<evidence type="ECO:0000250" key="2">
    <source>
        <dbReference type="UniProtKB" id="O75874"/>
    </source>
</evidence>
<evidence type="ECO:0000250" key="3">
    <source>
        <dbReference type="UniProtKB" id="O88844"/>
    </source>
</evidence>
<evidence type="ECO:0000269" key="4">
    <source>
    </source>
</evidence>
<evidence type="ECO:0000305" key="5"/>